<accession>Q8VGR9</accession>
<keyword id="KW-1003">Cell membrane</keyword>
<keyword id="KW-1015">Disulfide bond</keyword>
<keyword id="KW-0297">G-protein coupled receptor</keyword>
<keyword id="KW-0325">Glycoprotein</keyword>
<keyword id="KW-0472">Membrane</keyword>
<keyword id="KW-0552">Olfaction</keyword>
<keyword id="KW-0675">Receptor</keyword>
<keyword id="KW-1185">Reference proteome</keyword>
<keyword id="KW-0716">Sensory transduction</keyword>
<keyword id="KW-0807">Transducer</keyword>
<keyword id="KW-0812">Transmembrane</keyword>
<keyword id="KW-1133">Transmembrane helix</keyword>
<dbReference type="EMBL" id="AY073077">
    <property type="protein sequence ID" value="AAL60740.1"/>
    <property type="molecule type" value="Genomic_DNA"/>
</dbReference>
<dbReference type="EMBL" id="AY318239">
    <property type="protein sequence ID" value="AAP71489.1"/>
    <property type="molecule type" value="Genomic_DNA"/>
</dbReference>
<dbReference type="CCDS" id="CCDS16242.1"/>
<dbReference type="RefSeq" id="NP_667222.1">
    <property type="nucleotide sequence ID" value="NM_147011.1"/>
</dbReference>
<dbReference type="SMR" id="Q8VGR9"/>
<dbReference type="FunCoup" id="Q8VGR9">
    <property type="interactions" value="1243"/>
</dbReference>
<dbReference type="STRING" id="10090.ENSMUSP00000150199"/>
<dbReference type="GlyCosmos" id="Q8VGR9">
    <property type="glycosylation" value="2 sites, No reported glycans"/>
</dbReference>
<dbReference type="GlyGen" id="Q8VGR9">
    <property type="glycosylation" value="2 sites"/>
</dbReference>
<dbReference type="PaxDb" id="10090-ENSMUSP00000097490"/>
<dbReference type="DNASU" id="259013"/>
<dbReference type="Ensembl" id="ENSMUST00000099906.2">
    <property type="protein sequence ID" value="ENSMUSP00000097490.2"/>
    <property type="gene ID" value="ENSMUSG00000075200.3"/>
</dbReference>
<dbReference type="Ensembl" id="ENSMUST00000215171.2">
    <property type="protein sequence ID" value="ENSMUSP00000150199.2"/>
    <property type="gene ID" value="ENSMUSG00000075200.3"/>
</dbReference>
<dbReference type="GeneID" id="259013"/>
<dbReference type="KEGG" id="mmu:259013"/>
<dbReference type="UCSC" id="uc008klt.1">
    <property type="organism name" value="mouse"/>
</dbReference>
<dbReference type="AGR" id="MGI:3030878"/>
<dbReference type="CTD" id="504190"/>
<dbReference type="MGI" id="MGI:3030878">
    <property type="gene designation" value="Or8u9"/>
</dbReference>
<dbReference type="VEuPathDB" id="HostDB:ENSMUSG00000075200"/>
<dbReference type="eggNOG" id="ENOG502RF3K">
    <property type="taxonomic scope" value="Eukaryota"/>
</dbReference>
<dbReference type="GeneTree" id="ENSGT00950000182718"/>
<dbReference type="HOGENOM" id="CLU_012526_8_1_1"/>
<dbReference type="InParanoid" id="Q8VGR9"/>
<dbReference type="OMA" id="NQAFMFM"/>
<dbReference type="OrthoDB" id="9011197at2759"/>
<dbReference type="PhylomeDB" id="Q8VGR9"/>
<dbReference type="TreeFam" id="TF352753"/>
<dbReference type="Reactome" id="R-MMU-381753">
    <property type="pathway name" value="Olfactory Signaling Pathway"/>
</dbReference>
<dbReference type="BioGRID-ORCS" id="259013">
    <property type="hits" value="1 hit in 70 CRISPR screens"/>
</dbReference>
<dbReference type="PRO" id="PR:Q8VGR9"/>
<dbReference type="Proteomes" id="UP000000589">
    <property type="component" value="Chromosome 2"/>
</dbReference>
<dbReference type="RNAct" id="Q8VGR9">
    <property type="molecule type" value="protein"/>
</dbReference>
<dbReference type="GO" id="GO:0016020">
    <property type="term" value="C:membrane"/>
    <property type="evidence" value="ECO:0000247"/>
    <property type="project" value="MGI"/>
</dbReference>
<dbReference type="GO" id="GO:0005886">
    <property type="term" value="C:plasma membrane"/>
    <property type="evidence" value="ECO:0007669"/>
    <property type="project" value="UniProtKB-SubCell"/>
</dbReference>
<dbReference type="GO" id="GO:0004930">
    <property type="term" value="F:G protein-coupled receptor activity"/>
    <property type="evidence" value="ECO:0007669"/>
    <property type="project" value="UniProtKB-KW"/>
</dbReference>
<dbReference type="GO" id="GO:0004984">
    <property type="term" value="F:olfactory receptor activity"/>
    <property type="evidence" value="ECO:0000247"/>
    <property type="project" value="MGI"/>
</dbReference>
<dbReference type="GO" id="GO:0007186">
    <property type="term" value="P:G protein-coupled receptor signaling pathway"/>
    <property type="evidence" value="ECO:0000247"/>
    <property type="project" value="MGI"/>
</dbReference>
<dbReference type="GO" id="GO:0007608">
    <property type="term" value="P:sensory perception of smell"/>
    <property type="evidence" value="ECO:0000247"/>
    <property type="project" value="MGI"/>
</dbReference>
<dbReference type="CDD" id="cd15413">
    <property type="entry name" value="7tmA_OR8K-like"/>
    <property type="match status" value="1"/>
</dbReference>
<dbReference type="FunFam" id="1.20.1070.10:FF:000004">
    <property type="entry name" value="Olfactory receptor"/>
    <property type="match status" value="1"/>
</dbReference>
<dbReference type="Gene3D" id="1.20.1070.10">
    <property type="entry name" value="Rhodopsin 7-helix transmembrane proteins"/>
    <property type="match status" value="1"/>
</dbReference>
<dbReference type="InterPro" id="IPR000276">
    <property type="entry name" value="GPCR_Rhodpsn"/>
</dbReference>
<dbReference type="InterPro" id="IPR017452">
    <property type="entry name" value="GPCR_Rhodpsn_7TM"/>
</dbReference>
<dbReference type="InterPro" id="IPR000725">
    <property type="entry name" value="Olfact_rcpt"/>
</dbReference>
<dbReference type="PANTHER" id="PTHR48018">
    <property type="entry name" value="OLFACTORY RECEPTOR"/>
    <property type="match status" value="1"/>
</dbReference>
<dbReference type="Pfam" id="PF13853">
    <property type="entry name" value="7tm_4"/>
    <property type="match status" value="1"/>
</dbReference>
<dbReference type="PRINTS" id="PR00237">
    <property type="entry name" value="GPCRRHODOPSN"/>
</dbReference>
<dbReference type="PRINTS" id="PR00245">
    <property type="entry name" value="OLFACTORYR"/>
</dbReference>
<dbReference type="SUPFAM" id="SSF81321">
    <property type="entry name" value="Family A G protein-coupled receptor-like"/>
    <property type="match status" value="1"/>
</dbReference>
<dbReference type="PROSITE" id="PS00237">
    <property type="entry name" value="G_PROTEIN_RECEP_F1_1"/>
    <property type="match status" value="1"/>
</dbReference>
<dbReference type="PROSITE" id="PS50262">
    <property type="entry name" value="G_PROTEIN_RECEP_F1_2"/>
    <property type="match status" value="1"/>
</dbReference>
<gene>
    <name evidence="4" type="primary">Or8u9</name>
    <name evidence="4" type="synonym">Mor185-4</name>
    <name evidence="4" type="synonym">Olfr1044</name>
</gene>
<feature type="chain" id="PRO_0000150864" description="Olfactory receptor 8U9">
    <location>
        <begin position="1"/>
        <end position="314"/>
    </location>
</feature>
<feature type="topological domain" description="Extracellular" evidence="1">
    <location>
        <begin position="1"/>
        <end position="25"/>
    </location>
</feature>
<feature type="transmembrane region" description="Helical; Name=1" evidence="1">
    <location>
        <begin position="26"/>
        <end position="46"/>
    </location>
</feature>
<feature type="topological domain" description="Cytoplasmic" evidence="1">
    <location>
        <begin position="47"/>
        <end position="54"/>
    </location>
</feature>
<feature type="transmembrane region" description="Helical; Name=2" evidence="1">
    <location>
        <begin position="55"/>
        <end position="75"/>
    </location>
</feature>
<feature type="topological domain" description="Extracellular" evidence="1">
    <location>
        <begin position="76"/>
        <end position="99"/>
    </location>
</feature>
<feature type="transmembrane region" description="Helical; Name=3" evidence="1">
    <location>
        <begin position="100"/>
        <end position="120"/>
    </location>
</feature>
<feature type="topological domain" description="Cytoplasmic" evidence="1">
    <location>
        <begin position="121"/>
        <end position="133"/>
    </location>
</feature>
<feature type="transmembrane region" description="Helical; Name=4" evidence="1">
    <location>
        <begin position="134"/>
        <end position="154"/>
    </location>
</feature>
<feature type="topological domain" description="Extracellular" evidence="1">
    <location>
        <begin position="155"/>
        <end position="196"/>
    </location>
</feature>
<feature type="transmembrane region" description="Helical; Name=5" evidence="1">
    <location>
        <begin position="197"/>
        <end position="217"/>
    </location>
</feature>
<feature type="topological domain" description="Cytoplasmic" evidence="1">
    <location>
        <begin position="218"/>
        <end position="237"/>
    </location>
</feature>
<feature type="transmembrane region" description="Helical; Name=6" evidence="1">
    <location>
        <begin position="238"/>
        <end position="258"/>
    </location>
</feature>
<feature type="topological domain" description="Extracellular" evidence="1">
    <location>
        <begin position="259"/>
        <end position="271"/>
    </location>
</feature>
<feature type="transmembrane region" description="Helical; Name=7" evidence="1">
    <location>
        <begin position="272"/>
        <end position="292"/>
    </location>
</feature>
<feature type="topological domain" description="Cytoplasmic" evidence="1">
    <location>
        <begin position="293"/>
        <end position="314"/>
    </location>
</feature>
<feature type="glycosylation site" description="N-linked (GlcNAc...) asparagine" evidence="1">
    <location>
        <position position="5"/>
    </location>
</feature>
<feature type="glycosylation site" description="N-linked (GlcNAc...) asparagine" evidence="1">
    <location>
        <position position="265"/>
    </location>
</feature>
<feature type="disulfide bond" evidence="2">
    <location>
        <begin position="97"/>
        <end position="189"/>
    </location>
</feature>
<name>OR8U9_MOUSE</name>
<evidence type="ECO:0000255" key="1"/>
<evidence type="ECO:0000255" key="2">
    <source>
        <dbReference type="PROSITE-ProRule" id="PRU00521"/>
    </source>
</evidence>
<evidence type="ECO:0000305" key="3"/>
<evidence type="ECO:0000312" key="4">
    <source>
        <dbReference type="MGI" id="MGI:3030878"/>
    </source>
</evidence>
<sequence length="314" mass="35612">MAQINCTQVTEFILVGLTDREELKMPLFVVFLSIYLFTTLGNLGLILVIRTDARLHTPMYFFLSNLAFVDFCYSSVITPKMLGNFLYKQNMISFNACAAQLGCFLAFMTAECLLLASMAYDRYVAICNPLLYMVLMSPGICFQLVAAPYSYSFLVALFHAILTFRLCYCHSNAINHFYCDDMPLLRLTCSDTHSKQLWIFVCAGIMFISSLLIVFISYTFIISAILRMRSAEGRRKAFSTCGSHMLAVTIFYGTLIFMYLQPSSNHSLDTDKMASVFYTVIIPMLNPLIYSLRNKEVKDALKKLIASKNQMLSS</sequence>
<protein>
    <recommendedName>
        <fullName evidence="3">Olfactory receptor 8U9</fullName>
    </recommendedName>
    <alternativeName>
        <fullName>Olfactory receptor 1044</fullName>
    </alternativeName>
    <alternativeName>
        <fullName>Olfactory receptor 185-4</fullName>
    </alternativeName>
</protein>
<proteinExistence type="inferred from homology"/>
<comment type="function">
    <text>Potential odorant receptor.</text>
</comment>
<comment type="subcellular location">
    <subcellularLocation>
        <location evidence="3">Cell membrane</location>
        <topology evidence="1">Multi-pass membrane protein</topology>
    </subcellularLocation>
</comment>
<comment type="similarity">
    <text evidence="2">Belongs to the G-protein coupled receptor 1 family.</text>
</comment>
<reference key="1">
    <citation type="journal article" date="2002" name="Nat. Neurosci.">
        <title>The olfactory receptor gene superfamily of the mouse.</title>
        <authorList>
            <person name="Zhang X."/>
            <person name="Firestein S."/>
        </authorList>
    </citation>
    <scope>NUCLEOTIDE SEQUENCE [GENOMIC DNA]</scope>
</reference>
<reference key="2">
    <citation type="journal article" date="2002" name="Hum. Mol. Genet.">
        <title>Different evolutionary processes shaped the mouse and human olfactory receptor gene families.</title>
        <authorList>
            <person name="Young J.M."/>
            <person name="Friedman C."/>
            <person name="Williams E.M."/>
            <person name="Ross J.A."/>
            <person name="Tonnes-Priddy L."/>
            <person name="Trask B.J."/>
        </authorList>
    </citation>
    <scope>NUCLEOTIDE SEQUENCE [GENOMIC DNA]</scope>
</reference>
<reference key="3">
    <citation type="journal article" date="2002" name="Hum. Mol. Genet.">
        <authorList>
            <person name="Young J.M."/>
            <person name="Friedman C."/>
            <person name="Williams E.M."/>
            <person name="Ross J.A."/>
            <person name="Tonnes-Priddy L."/>
            <person name="Trask B.J."/>
        </authorList>
    </citation>
    <scope>ERRATUM OF PUBMED:11875048</scope>
</reference>
<organism>
    <name type="scientific">Mus musculus</name>
    <name type="common">Mouse</name>
    <dbReference type="NCBI Taxonomy" id="10090"/>
    <lineage>
        <taxon>Eukaryota</taxon>
        <taxon>Metazoa</taxon>
        <taxon>Chordata</taxon>
        <taxon>Craniata</taxon>
        <taxon>Vertebrata</taxon>
        <taxon>Euteleostomi</taxon>
        <taxon>Mammalia</taxon>
        <taxon>Eutheria</taxon>
        <taxon>Euarchontoglires</taxon>
        <taxon>Glires</taxon>
        <taxon>Rodentia</taxon>
        <taxon>Myomorpha</taxon>
        <taxon>Muroidea</taxon>
        <taxon>Muridae</taxon>
        <taxon>Murinae</taxon>
        <taxon>Mus</taxon>
        <taxon>Mus</taxon>
    </lineage>
</organism>